<reference key="1">
    <citation type="journal article" date="2005" name="Nature">
        <title>The genome of the social amoeba Dictyostelium discoideum.</title>
        <authorList>
            <person name="Eichinger L."/>
            <person name="Pachebat J.A."/>
            <person name="Gloeckner G."/>
            <person name="Rajandream M.A."/>
            <person name="Sucgang R."/>
            <person name="Berriman M."/>
            <person name="Song J."/>
            <person name="Olsen R."/>
            <person name="Szafranski K."/>
            <person name="Xu Q."/>
            <person name="Tunggal B."/>
            <person name="Kummerfeld S."/>
            <person name="Madera M."/>
            <person name="Konfortov B.A."/>
            <person name="Rivero F."/>
            <person name="Bankier A.T."/>
            <person name="Lehmann R."/>
            <person name="Hamlin N."/>
            <person name="Davies R."/>
            <person name="Gaudet P."/>
            <person name="Fey P."/>
            <person name="Pilcher K."/>
            <person name="Chen G."/>
            <person name="Saunders D."/>
            <person name="Sodergren E.J."/>
            <person name="Davis P."/>
            <person name="Kerhornou A."/>
            <person name="Nie X."/>
            <person name="Hall N."/>
            <person name="Anjard C."/>
            <person name="Hemphill L."/>
            <person name="Bason N."/>
            <person name="Farbrother P."/>
            <person name="Desany B."/>
            <person name="Just E."/>
            <person name="Morio T."/>
            <person name="Rost R."/>
            <person name="Churcher C.M."/>
            <person name="Cooper J."/>
            <person name="Haydock S."/>
            <person name="van Driessche N."/>
            <person name="Cronin A."/>
            <person name="Goodhead I."/>
            <person name="Muzny D.M."/>
            <person name="Mourier T."/>
            <person name="Pain A."/>
            <person name="Lu M."/>
            <person name="Harper D."/>
            <person name="Lindsay R."/>
            <person name="Hauser H."/>
            <person name="James K.D."/>
            <person name="Quiles M."/>
            <person name="Madan Babu M."/>
            <person name="Saito T."/>
            <person name="Buchrieser C."/>
            <person name="Wardroper A."/>
            <person name="Felder M."/>
            <person name="Thangavelu M."/>
            <person name="Johnson D."/>
            <person name="Knights A."/>
            <person name="Loulseged H."/>
            <person name="Mungall K.L."/>
            <person name="Oliver K."/>
            <person name="Price C."/>
            <person name="Quail M.A."/>
            <person name="Urushihara H."/>
            <person name="Hernandez J."/>
            <person name="Rabbinowitsch E."/>
            <person name="Steffen D."/>
            <person name="Sanders M."/>
            <person name="Ma J."/>
            <person name="Kohara Y."/>
            <person name="Sharp S."/>
            <person name="Simmonds M.N."/>
            <person name="Spiegler S."/>
            <person name="Tivey A."/>
            <person name="Sugano S."/>
            <person name="White B."/>
            <person name="Walker D."/>
            <person name="Woodward J.R."/>
            <person name="Winckler T."/>
            <person name="Tanaka Y."/>
            <person name="Shaulsky G."/>
            <person name="Schleicher M."/>
            <person name="Weinstock G.M."/>
            <person name="Rosenthal A."/>
            <person name="Cox E.C."/>
            <person name="Chisholm R.L."/>
            <person name="Gibbs R.A."/>
            <person name="Loomis W.F."/>
            <person name="Platzer M."/>
            <person name="Kay R.R."/>
            <person name="Williams J.G."/>
            <person name="Dear P.H."/>
            <person name="Noegel A.A."/>
            <person name="Barrell B.G."/>
            <person name="Kuspa A."/>
        </authorList>
    </citation>
    <scope>NUCLEOTIDE SEQUENCE [LARGE SCALE GENOMIC DNA]</scope>
    <source>
        <strain>AX4</strain>
    </source>
</reference>
<reference key="2">
    <citation type="journal article" date="2003" name="Dev. Biol.">
        <title>A novel developmental mechanism in Dictyostelium revealed in a screen for communication mutants.</title>
        <authorList>
            <person name="Kibler K."/>
            <person name="Nguyen T.-L."/>
            <person name="Svetz J."/>
            <person name="Van Driessche N."/>
            <person name="Ibarra M."/>
            <person name="Thompson C."/>
            <person name="Shaw C."/>
            <person name="Shaulsky G."/>
        </authorList>
    </citation>
    <scope>NUCLEOTIDE SEQUENCE [GENOMIC DNA] OF 269-347</scope>
</reference>
<accession>Q54DG1</accession>
<accession>Q86MX3</accession>
<comment type="catalytic activity">
    <reaction>
        <text>an aldehyde + NADP(+) + H2O = a carboxylate + NADPH + 2 H(+)</text>
        <dbReference type="Rhea" id="RHEA:11888"/>
        <dbReference type="ChEBI" id="CHEBI:15377"/>
        <dbReference type="ChEBI" id="CHEBI:15378"/>
        <dbReference type="ChEBI" id="CHEBI:17478"/>
        <dbReference type="ChEBI" id="CHEBI:29067"/>
        <dbReference type="ChEBI" id="CHEBI:57783"/>
        <dbReference type="ChEBI" id="CHEBI:58349"/>
        <dbReference type="EC" id="1.2.1.5"/>
    </reaction>
</comment>
<comment type="catalytic activity">
    <reaction>
        <text>an aldehyde + NAD(+) + H2O = a carboxylate + NADH + 2 H(+)</text>
        <dbReference type="Rhea" id="RHEA:16185"/>
        <dbReference type="ChEBI" id="CHEBI:15377"/>
        <dbReference type="ChEBI" id="CHEBI:15378"/>
        <dbReference type="ChEBI" id="CHEBI:17478"/>
        <dbReference type="ChEBI" id="CHEBI:29067"/>
        <dbReference type="ChEBI" id="CHEBI:57540"/>
        <dbReference type="ChEBI" id="CHEBI:57945"/>
        <dbReference type="EC" id="1.2.1.5"/>
    </reaction>
</comment>
<comment type="subcellular location">
    <subcellularLocation>
        <location evidence="1">Cytoplasm</location>
    </subcellularLocation>
</comment>
<comment type="similarity">
    <text evidence="3">Belongs to the aldehyde dehydrogenase family.</text>
</comment>
<protein>
    <recommendedName>
        <fullName>Aldehyde dehydrogenase family 3 comG</fullName>
        <ecNumber>1.2.1.5</ecNumber>
    </recommendedName>
    <alternativeName>
        <fullName>Communication mutant protein G</fullName>
    </alternativeName>
</protein>
<organism>
    <name type="scientific">Dictyostelium discoideum</name>
    <name type="common">Social amoeba</name>
    <dbReference type="NCBI Taxonomy" id="44689"/>
    <lineage>
        <taxon>Eukaryota</taxon>
        <taxon>Amoebozoa</taxon>
        <taxon>Evosea</taxon>
        <taxon>Eumycetozoa</taxon>
        <taxon>Dictyostelia</taxon>
        <taxon>Dictyosteliales</taxon>
        <taxon>Dictyosteliaceae</taxon>
        <taxon>Dictyostelium</taxon>
    </lineage>
</organism>
<feature type="chain" id="PRO_0000342179" description="Aldehyde dehydrogenase family 3 comG">
    <location>
        <begin position="1"/>
        <end position="470"/>
    </location>
</feature>
<feature type="active site" evidence="2">
    <location>
        <position position="218"/>
    </location>
</feature>
<feature type="active site" evidence="2">
    <location>
        <position position="252"/>
    </location>
</feature>
<feature type="binding site" evidence="1">
    <location>
        <begin position="196"/>
        <end position="201"/>
    </location>
    <ligand>
        <name>NAD(+)</name>
        <dbReference type="ChEBI" id="CHEBI:57540"/>
    </ligand>
</feature>
<evidence type="ECO:0000250" key="1"/>
<evidence type="ECO:0000255" key="2">
    <source>
        <dbReference type="PROSITE-ProRule" id="PRU10007"/>
    </source>
</evidence>
<evidence type="ECO:0000305" key="3"/>
<keyword id="KW-0963">Cytoplasm</keyword>
<keyword id="KW-0520">NAD</keyword>
<keyword id="KW-0560">Oxidoreductase</keyword>
<keyword id="KW-1185">Reference proteome</keyword>
<name>ALDH3_DICDI</name>
<proteinExistence type="inferred from homology"/>
<gene>
    <name type="primary">comG</name>
    <name type="ORF">DDB_G0292270</name>
</gene>
<dbReference type="EC" id="1.2.1.5"/>
<dbReference type="EMBL" id="AAFI02000189">
    <property type="protein sequence ID" value="EAL61259.1"/>
    <property type="molecule type" value="Genomic_DNA"/>
</dbReference>
<dbReference type="EMBL" id="AY221644">
    <property type="protein sequence ID" value="AAO34400.1"/>
    <property type="molecule type" value="Genomic_DNA"/>
</dbReference>
<dbReference type="RefSeq" id="XP_629680.1">
    <property type="nucleotide sequence ID" value="XM_629678.1"/>
</dbReference>
<dbReference type="SMR" id="Q54DG1"/>
<dbReference type="FunCoup" id="Q54DG1">
    <property type="interactions" value="208"/>
</dbReference>
<dbReference type="STRING" id="44689.Q54DG1"/>
<dbReference type="PaxDb" id="44689-DDB0185188"/>
<dbReference type="EnsemblProtists" id="EAL61259">
    <property type="protein sequence ID" value="EAL61259"/>
    <property type="gene ID" value="DDB_G0292270"/>
</dbReference>
<dbReference type="GeneID" id="8628596"/>
<dbReference type="KEGG" id="ddi:DDB_G0292270"/>
<dbReference type="dictyBase" id="DDB_G0292270">
    <property type="gene designation" value="comG"/>
</dbReference>
<dbReference type="VEuPathDB" id="AmoebaDB:DDB_G0292270"/>
<dbReference type="eggNOG" id="KOG2456">
    <property type="taxonomic scope" value="Eukaryota"/>
</dbReference>
<dbReference type="HOGENOM" id="CLU_005391_3_1_1"/>
<dbReference type="InParanoid" id="Q54DG1"/>
<dbReference type="OMA" id="PLVAYWF"/>
<dbReference type="PhylomeDB" id="Q54DG1"/>
<dbReference type="Reactome" id="R-DDI-211945">
    <property type="pathway name" value="Phase I - Functionalization of compounds"/>
</dbReference>
<dbReference type="Reactome" id="R-DDI-389599">
    <property type="pathway name" value="Alpha-oxidation of phytanate"/>
</dbReference>
<dbReference type="Reactome" id="R-DDI-6798695">
    <property type="pathway name" value="Neutrophil degranulation"/>
</dbReference>
<dbReference type="Reactome" id="R-DDI-9603798">
    <property type="pathway name" value="Class I peroxisomal membrane protein import"/>
</dbReference>
<dbReference type="Reactome" id="R-DDI-9609523">
    <property type="pathway name" value="Insertion of tail-anchored proteins into the endoplasmic reticulum membrane"/>
</dbReference>
<dbReference type="Reactome" id="R-DDI-9845614">
    <property type="pathway name" value="Sphingolipid catabolism"/>
</dbReference>
<dbReference type="PRO" id="PR:Q54DG1"/>
<dbReference type="Proteomes" id="UP000002195">
    <property type="component" value="Chromosome 6"/>
</dbReference>
<dbReference type="GO" id="GO:0005737">
    <property type="term" value="C:cytoplasm"/>
    <property type="evidence" value="ECO:0000318"/>
    <property type="project" value="GO_Central"/>
</dbReference>
<dbReference type="GO" id="GO:0005811">
    <property type="term" value="C:lipid droplet"/>
    <property type="evidence" value="ECO:0007005"/>
    <property type="project" value="dictyBase"/>
</dbReference>
<dbReference type="GO" id="GO:0004028">
    <property type="term" value="F:3-chloroallyl aldehyde dehydrogenase activity"/>
    <property type="evidence" value="ECO:0000250"/>
    <property type="project" value="dictyBase"/>
</dbReference>
<dbReference type="GO" id="GO:0004029">
    <property type="term" value="F:aldehyde dehydrogenase (NAD+) activity"/>
    <property type="evidence" value="ECO:0000318"/>
    <property type="project" value="GO_Central"/>
</dbReference>
<dbReference type="GO" id="GO:0033721">
    <property type="term" value="F:aldehyde dehydrogenase (NADP+) activity"/>
    <property type="evidence" value="ECO:0007669"/>
    <property type="project" value="RHEA"/>
</dbReference>
<dbReference type="GO" id="GO:0006081">
    <property type="term" value="P:aldehyde metabolic process"/>
    <property type="evidence" value="ECO:0000250"/>
    <property type="project" value="dictyBase"/>
</dbReference>
<dbReference type="GO" id="GO:0030587">
    <property type="term" value="P:sorocarp development"/>
    <property type="evidence" value="ECO:0000315"/>
    <property type="project" value="dictyBase"/>
</dbReference>
<dbReference type="CDD" id="cd07087">
    <property type="entry name" value="ALDH_F3-13-14_CALDH-like"/>
    <property type="match status" value="1"/>
</dbReference>
<dbReference type="FunFam" id="3.40.309.10:FF:000025">
    <property type="entry name" value="Aldehyde dehydrogenase"/>
    <property type="match status" value="1"/>
</dbReference>
<dbReference type="FunFam" id="3.40.605.10:FF:000004">
    <property type="entry name" value="Aldehyde dehydrogenase"/>
    <property type="match status" value="1"/>
</dbReference>
<dbReference type="Gene3D" id="3.40.605.10">
    <property type="entry name" value="Aldehyde Dehydrogenase, Chain A, domain 1"/>
    <property type="match status" value="1"/>
</dbReference>
<dbReference type="Gene3D" id="3.40.309.10">
    <property type="entry name" value="Aldehyde Dehydrogenase, Chain A, domain 2"/>
    <property type="match status" value="1"/>
</dbReference>
<dbReference type="InterPro" id="IPR016161">
    <property type="entry name" value="Ald_DH/histidinol_DH"/>
</dbReference>
<dbReference type="InterPro" id="IPR016163">
    <property type="entry name" value="Ald_DH_C"/>
</dbReference>
<dbReference type="InterPro" id="IPR029510">
    <property type="entry name" value="Ald_DH_CS_GLU"/>
</dbReference>
<dbReference type="InterPro" id="IPR016162">
    <property type="entry name" value="Ald_DH_N"/>
</dbReference>
<dbReference type="InterPro" id="IPR015590">
    <property type="entry name" value="Aldehyde_DH_dom"/>
</dbReference>
<dbReference type="InterPro" id="IPR012394">
    <property type="entry name" value="Aldehyde_DH_NAD(P)"/>
</dbReference>
<dbReference type="PANTHER" id="PTHR43570">
    <property type="entry name" value="ALDEHYDE DEHYDROGENASE"/>
    <property type="match status" value="1"/>
</dbReference>
<dbReference type="PANTHER" id="PTHR43570:SF16">
    <property type="entry name" value="ALDEHYDE DEHYDROGENASE TYPE III, ISOFORM Q"/>
    <property type="match status" value="1"/>
</dbReference>
<dbReference type="Pfam" id="PF00171">
    <property type="entry name" value="Aldedh"/>
    <property type="match status" value="1"/>
</dbReference>
<dbReference type="PIRSF" id="PIRSF036492">
    <property type="entry name" value="ALDH"/>
    <property type="match status" value="1"/>
</dbReference>
<dbReference type="SUPFAM" id="SSF53720">
    <property type="entry name" value="ALDH-like"/>
    <property type="match status" value="1"/>
</dbReference>
<dbReference type="PROSITE" id="PS00687">
    <property type="entry name" value="ALDEHYDE_DEHYDR_GLU"/>
    <property type="match status" value="1"/>
</dbReference>
<sequence>MSTSAAATLPLSVISKNLRKVFLSQKTRKIDWRYSQLKAIKKMMSENKDNITAAVKKDLGKHEFEIHQTEIVMIQTELDETISHLESWNKTEKVYSPLHFKPASSYILKEPLGVVLIMSPWNYPVNLALIPLIGAIAGGNCALLKLSRHSYNISKLLHGLLTKYLDPECFEFDCEGGAPYITELLEYKWDHIFFTGSVKVGKIVYQAAAKFLTPVTLELGGKNPCIVDKDTDIKLTARRLIWGKCWNAGQTCIGLDYLIVHKSILEPLIEEFKVVLKEFFGEDIKKSTSFARIISSAAAERLQQLFSMGKVVIGGEADIAERYIAPTVIVDPDLDSPLMQDEIFGPVLPIVTYENIDECLEFIQNRPHALTLYLFSRDQAIQDKVLDGTQSGSLMINDTLLHFTNPNLPFGGIGDSGIGSYHGKGTFDIFVHKRGLVQSTTKKFLDLPLRYPPYTPFSDNVAGKILGSGW</sequence>